<feature type="chain" id="PRO_0000305082" description="Protein angel homolog 2">
    <location>
        <begin position="1"/>
        <end position="569"/>
    </location>
</feature>
<feature type="region of interest" description="Disordered" evidence="1">
    <location>
        <begin position="1"/>
        <end position="22"/>
    </location>
</feature>
<feature type="region of interest" description="Disordered" evidence="1">
    <location>
        <begin position="63"/>
        <end position="92"/>
    </location>
</feature>
<feature type="region of interest" description="Disordered" evidence="1">
    <location>
        <begin position="109"/>
        <end position="155"/>
    </location>
</feature>
<feature type="compositionally biased region" description="Polar residues" evidence="1">
    <location>
        <begin position="63"/>
        <end position="72"/>
    </location>
</feature>
<feature type="compositionally biased region" description="Low complexity" evidence="1">
    <location>
        <begin position="139"/>
        <end position="150"/>
    </location>
</feature>
<feature type="sequence conflict" description="In Ref. 2; AAI24748." evidence="2" ref="2">
    <original>A</original>
    <variation>P</variation>
    <location>
        <position position="162"/>
    </location>
</feature>
<feature type="sequence conflict" description="In Ref. 2; AAI24748." evidence="2" ref="2">
    <original>T</original>
    <variation>N</variation>
    <location>
        <position position="425"/>
    </location>
</feature>
<feature type="sequence conflict" description="In Ref. 2; AAI24748." evidence="2" ref="2">
    <original>K</original>
    <variation>E</variation>
    <location>
        <position position="537"/>
    </location>
</feature>
<sequence>MRKGRHMPRHTNANYARPGVSPNHPMFGRYLSTVGFPPAQNVYNHWRHWYQPGHLWWTQPPQLQHPSSSFSTVRHPFNRPPRPPDPYQWSSWRQTGVLPHTRGLHLSAGLMESTDRPPPQKRRKSAEGEISQRSPQHSPPKGSRSPKGSPEWLRNVSSIEVANRTSAVPELKRHWEDLSHLCKAAPSVNRGKQKWPFDFSVMSYNILSQDLLCDNTYLYRHCNPPVLDWRNRFPNIIKELEQYSADIMCLQEVQEDHYKQQIKPSLESLGYHCEFKRRTGLKPDGCAVIFKRERFSLVSCHPVEYFRRGVPLMDRDNVGLIVLLRPIDPHVSLSNICVANTHLLYNPRRGDIKLAQLAMLLAEISRVSQLPDSSVCPVLLCGDFNSVPWSPLYRFIKDRRLDYDGMPIGKVSGQEETPRGQRILTVPIWPRSLGISQQCQYENQTRDSELRDLEQTERESFTEASIEHCLRLTSAYSHHLKESGQPEITTCHSRTAITVDYIFYSAALGDVMAQAEYSAPPERGLQLLGRLALVGEKELQKVNGLPNQHNSSDHLPLLTRFRLHPQADS</sequence>
<reference key="1">
    <citation type="journal article" date="2013" name="Nature">
        <title>The zebrafish reference genome sequence and its relationship to the human genome.</title>
        <authorList>
            <person name="Howe K."/>
            <person name="Clark M.D."/>
            <person name="Torroja C.F."/>
            <person name="Torrance J."/>
            <person name="Berthelot C."/>
            <person name="Muffato M."/>
            <person name="Collins J.E."/>
            <person name="Humphray S."/>
            <person name="McLaren K."/>
            <person name="Matthews L."/>
            <person name="McLaren S."/>
            <person name="Sealy I."/>
            <person name="Caccamo M."/>
            <person name="Churcher C."/>
            <person name="Scott C."/>
            <person name="Barrett J.C."/>
            <person name="Koch R."/>
            <person name="Rauch G.J."/>
            <person name="White S."/>
            <person name="Chow W."/>
            <person name="Kilian B."/>
            <person name="Quintais L.T."/>
            <person name="Guerra-Assuncao J.A."/>
            <person name="Zhou Y."/>
            <person name="Gu Y."/>
            <person name="Yen J."/>
            <person name="Vogel J.H."/>
            <person name="Eyre T."/>
            <person name="Redmond S."/>
            <person name="Banerjee R."/>
            <person name="Chi J."/>
            <person name="Fu B."/>
            <person name="Langley E."/>
            <person name="Maguire S.F."/>
            <person name="Laird G.K."/>
            <person name="Lloyd D."/>
            <person name="Kenyon E."/>
            <person name="Donaldson S."/>
            <person name="Sehra H."/>
            <person name="Almeida-King J."/>
            <person name="Loveland J."/>
            <person name="Trevanion S."/>
            <person name="Jones M."/>
            <person name="Quail M."/>
            <person name="Willey D."/>
            <person name="Hunt A."/>
            <person name="Burton J."/>
            <person name="Sims S."/>
            <person name="McLay K."/>
            <person name="Plumb B."/>
            <person name="Davis J."/>
            <person name="Clee C."/>
            <person name="Oliver K."/>
            <person name="Clark R."/>
            <person name="Riddle C."/>
            <person name="Elliot D."/>
            <person name="Threadgold G."/>
            <person name="Harden G."/>
            <person name="Ware D."/>
            <person name="Begum S."/>
            <person name="Mortimore B."/>
            <person name="Kerry G."/>
            <person name="Heath P."/>
            <person name="Phillimore B."/>
            <person name="Tracey A."/>
            <person name="Corby N."/>
            <person name="Dunn M."/>
            <person name="Johnson C."/>
            <person name="Wood J."/>
            <person name="Clark S."/>
            <person name="Pelan S."/>
            <person name="Griffiths G."/>
            <person name="Smith M."/>
            <person name="Glithero R."/>
            <person name="Howden P."/>
            <person name="Barker N."/>
            <person name="Lloyd C."/>
            <person name="Stevens C."/>
            <person name="Harley J."/>
            <person name="Holt K."/>
            <person name="Panagiotidis G."/>
            <person name="Lovell J."/>
            <person name="Beasley H."/>
            <person name="Henderson C."/>
            <person name="Gordon D."/>
            <person name="Auger K."/>
            <person name="Wright D."/>
            <person name="Collins J."/>
            <person name="Raisen C."/>
            <person name="Dyer L."/>
            <person name="Leung K."/>
            <person name="Robertson L."/>
            <person name="Ambridge K."/>
            <person name="Leongamornlert D."/>
            <person name="McGuire S."/>
            <person name="Gilderthorp R."/>
            <person name="Griffiths C."/>
            <person name="Manthravadi D."/>
            <person name="Nichol S."/>
            <person name="Barker G."/>
            <person name="Whitehead S."/>
            <person name="Kay M."/>
            <person name="Brown J."/>
            <person name="Murnane C."/>
            <person name="Gray E."/>
            <person name="Humphries M."/>
            <person name="Sycamore N."/>
            <person name="Barker D."/>
            <person name="Saunders D."/>
            <person name="Wallis J."/>
            <person name="Babbage A."/>
            <person name="Hammond S."/>
            <person name="Mashreghi-Mohammadi M."/>
            <person name="Barr L."/>
            <person name="Martin S."/>
            <person name="Wray P."/>
            <person name="Ellington A."/>
            <person name="Matthews N."/>
            <person name="Ellwood M."/>
            <person name="Woodmansey R."/>
            <person name="Clark G."/>
            <person name="Cooper J."/>
            <person name="Tromans A."/>
            <person name="Grafham D."/>
            <person name="Skuce C."/>
            <person name="Pandian R."/>
            <person name="Andrews R."/>
            <person name="Harrison E."/>
            <person name="Kimberley A."/>
            <person name="Garnett J."/>
            <person name="Fosker N."/>
            <person name="Hall R."/>
            <person name="Garner P."/>
            <person name="Kelly D."/>
            <person name="Bird C."/>
            <person name="Palmer S."/>
            <person name="Gehring I."/>
            <person name="Berger A."/>
            <person name="Dooley C.M."/>
            <person name="Ersan-Urun Z."/>
            <person name="Eser C."/>
            <person name="Geiger H."/>
            <person name="Geisler M."/>
            <person name="Karotki L."/>
            <person name="Kirn A."/>
            <person name="Konantz J."/>
            <person name="Konantz M."/>
            <person name="Oberlander M."/>
            <person name="Rudolph-Geiger S."/>
            <person name="Teucke M."/>
            <person name="Lanz C."/>
            <person name="Raddatz G."/>
            <person name="Osoegawa K."/>
            <person name="Zhu B."/>
            <person name="Rapp A."/>
            <person name="Widaa S."/>
            <person name="Langford C."/>
            <person name="Yang F."/>
            <person name="Schuster S.C."/>
            <person name="Carter N.P."/>
            <person name="Harrow J."/>
            <person name="Ning Z."/>
            <person name="Herrero J."/>
            <person name="Searle S.M."/>
            <person name="Enright A."/>
            <person name="Geisler R."/>
            <person name="Plasterk R.H."/>
            <person name="Lee C."/>
            <person name="Westerfield M."/>
            <person name="de Jong P.J."/>
            <person name="Zon L.I."/>
            <person name="Postlethwait J.H."/>
            <person name="Nusslein-Volhard C."/>
            <person name="Hubbard T.J."/>
            <person name="Roest Crollius H."/>
            <person name="Rogers J."/>
            <person name="Stemple D.L."/>
        </authorList>
    </citation>
    <scope>NUCLEOTIDE SEQUENCE [LARGE SCALE GENOMIC DNA]</scope>
    <source>
        <strain>Tuebingen</strain>
    </source>
</reference>
<reference key="2">
    <citation type="submission" date="2006-10" db="EMBL/GenBank/DDBJ databases">
        <authorList>
            <consortium name="NIH - Zebrafish Gene Collection (ZGC) project"/>
        </authorList>
    </citation>
    <scope>NUCLEOTIDE SEQUENCE [LARGE SCALE MRNA]</scope>
    <source>
        <tissue>Ovary</tissue>
    </source>
</reference>
<dbReference type="EMBL" id="BX649591">
    <property type="protein sequence ID" value="CAI11673.1"/>
    <property type="molecule type" value="Genomic_DNA"/>
</dbReference>
<dbReference type="EMBL" id="BC124747">
    <property type="protein sequence ID" value="AAI24748.1"/>
    <property type="molecule type" value="mRNA"/>
</dbReference>
<dbReference type="RefSeq" id="NP_001025131.1">
    <property type="nucleotide sequence ID" value="NM_001029960.1"/>
</dbReference>
<dbReference type="SMR" id="Q5RGT6"/>
<dbReference type="FunCoup" id="Q5RGT6">
    <property type="interactions" value="493"/>
</dbReference>
<dbReference type="STRING" id="7955.ENSDARP00000033311"/>
<dbReference type="PaxDb" id="7955-ENSDARP00000033311"/>
<dbReference type="Ensembl" id="ENSDART00000036371">
    <property type="protein sequence ID" value="ENSDARP00000033311"/>
    <property type="gene ID" value="ENSDARG00000016743"/>
</dbReference>
<dbReference type="GeneID" id="562704"/>
<dbReference type="KEGG" id="dre:562704"/>
<dbReference type="AGR" id="ZFIN:ZDB-GENE-030131-6498"/>
<dbReference type="CTD" id="90806"/>
<dbReference type="ZFIN" id="ZDB-GENE-030131-6498">
    <property type="gene designation" value="angel2"/>
</dbReference>
<dbReference type="eggNOG" id="KOG2338">
    <property type="taxonomic scope" value="Eukaryota"/>
</dbReference>
<dbReference type="HOGENOM" id="CLU_016428_0_2_1"/>
<dbReference type="InParanoid" id="Q5RGT6"/>
<dbReference type="OMA" id="WRPPQFC"/>
<dbReference type="OrthoDB" id="10253982at2759"/>
<dbReference type="PhylomeDB" id="Q5RGT6"/>
<dbReference type="TreeFam" id="TF316126"/>
<dbReference type="PRO" id="PR:Q5RGT6"/>
<dbReference type="Proteomes" id="UP000000437">
    <property type="component" value="Chromosome 20"/>
</dbReference>
<dbReference type="Bgee" id="ENSDARG00000016743">
    <property type="expression patterns" value="Expressed in early embryo and 28 other cell types or tissues"/>
</dbReference>
<dbReference type="ExpressionAtlas" id="Q5RGT6">
    <property type="expression patterns" value="baseline and differential"/>
</dbReference>
<dbReference type="GO" id="GO:0003824">
    <property type="term" value="F:catalytic activity"/>
    <property type="evidence" value="ECO:0007669"/>
    <property type="project" value="InterPro"/>
</dbReference>
<dbReference type="GO" id="GO:0003730">
    <property type="term" value="F:mRNA 3'-UTR binding"/>
    <property type="evidence" value="ECO:0000318"/>
    <property type="project" value="GO_Central"/>
</dbReference>
<dbReference type="GO" id="GO:0070935">
    <property type="term" value="P:3'-UTR-mediated mRNA stabilization"/>
    <property type="evidence" value="ECO:0000318"/>
    <property type="project" value="GO_Central"/>
</dbReference>
<dbReference type="Gene3D" id="3.60.10.10">
    <property type="entry name" value="Endonuclease/exonuclease/phosphatase"/>
    <property type="match status" value="1"/>
</dbReference>
<dbReference type="InterPro" id="IPR050410">
    <property type="entry name" value="CCR4/nocturin_mRNA_transcr"/>
</dbReference>
<dbReference type="InterPro" id="IPR036691">
    <property type="entry name" value="Endo/exonu/phosph_ase_sf"/>
</dbReference>
<dbReference type="InterPro" id="IPR005135">
    <property type="entry name" value="Endo/exonuclease/phosphatase"/>
</dbReference>
<dbReference type="PANTHER" id="PTHR12121">
    <property type="entry name" value="CARBON CATABOLITE REPRESSOR PROTEIN 4"/>
    <property type="match status" value="1"/>
</dbReference>
<dbReference type="PANTHER" id="PTHR12121:SF27">
    <property type="entry name" value="PROTEIN ANGEL HOMOLOG 2"/>
    <property type="match status" value="1"/>
</dbReference>
<dbReference type="Pfam" id="PF03372">
    <property type="entry name" value="Exo_endo_phos"/>
    <property type="match status" value="1"/>
</dbReference>
<dbReference type="SUPFAM" id="SSF56219">
    <property type="entry name" value="DNase I-like"/>
    <property type="match status" value="1"/>
</dbReference>
<gene>
    <name type="primary">angel2</name>
    <name type="ORF">si:ch211-181h6.2</name>
    <name type="ORF">zgc:153829</name>
</gene>
<comment type="similarity">
    <text evidence="2">Belongs to the CCR4/nocturin family.</text>
</comment>
<evidence type="ECO:0000256" key="1">
    <source>
        <dbReference type="SAM" id="MobiDB-lite"/>
    </source>
</evidence>
<evidence type="ECO:0000305" key="2"/>
<proteinExistence type="evidence at transcript level"/>
<accession>Q5RGT6</accession>
<accession>A0AUR1</accession>
<name>ANGE2_DANRE</name>
<organism>
    <name type="scientific">Danio rerio</name>
    <name type="common">Zebrafish</name>
    <name type="synonym">Brachydanio rerio</name>
    <dbReference type="NCBI Taxonomy" id="7955"/>
    <lineage>
        <taxon>Eukaryota</taxon>
        <taxon>Metazoa</taxon>
        <taxon>Chordata</taxon>
        <taxon>Craniata</taxon>
        <taxon>Vertebrata</taxon>
        <taxon>Euteleostomi</taxon>
        <taxon>Actinopterygii</taxon>
        <taxon>Neopterygii</taxon>
        <taxon>Teleostei</taxon>
        <taxon>Ostariophysi</taxon>
        <taxon>Cypriniformes</taxon>
        <taxon>Danionidae</taxon>
        <taxon>Danioninae</taxon>
        <taxon>Danio</taxon>
    </lineage>
</organism>
<protein>
    <recommendedName>
        <fullName>Protein angel homolog 2</fullName>
    </recommendedName>
</protein>
<keyword id="KW-1185">Reference proteome</keyword>